<sequence>MPREIITLQVGQCGNQIGMEFWKQLCLEHGISKDGILEDFATQGGDRKDVFFYQADDEHYIPRALLIDLEPRVINSIQNSEYRNLYNHENVFVADHGGGAGNNWASGYHQGEQVEEDIMDMIDREADGSDSLEGFVLCHSIAGGTGSGMGSYLLEALNDRYSKKLVQTYSVFPNQMETSDVVVQPYNSLLTLKRLTLNADCVVVLDNTALNRIAVDRLHIPNPTFAQTNSLVSTVMSASTTTLRYPGYMNNDLVGLVASLIPTPRCHFLMTGYTPLTVERQANAIRKTTVLDVMRRLLQAKNIMVSSYARTKEASQAKYISILNIIQGEVDPTQVHKSLQRIRERKLANFIEWGPASIQVALSRKSPYVQTAHRVSGLMLASHTSIRHLFSKCISQYEKLRKKQAFLDNYRKFPMFADNDLSEFDESREIVQNLVDEYKACESADYIKWGMEDRGKQVSGEGNTSGTVDSRVGAS</sequence>
<feature type="chain" id="PRO_0000048476" description="Tubulin gamma chain">
    <location>
        <begin position="1"/>
        <end position="475"/>
    </location>
</feature>
<feature type="region of interest" description="Disordered" evidence="3">
    <location>
        <begin position="455"/>
        <end position="475"/>
    </location>
</feature>
<feature type="binding site" evidence="2">
    <location>
        <begin position="142"/>
        <end position="148"/>
    </location>
    <ligand>
        <name>GTP</name>
        <dbReference type="ChEBI" id="CHEBI:37565"/>
    </ligand>
</feature>
<accession>Q9XFG3</accession>
<accession>A9THV1</accession>
<name>TBG_PHYPA</name>
<dbReference type="EMBL" id="AF142098">
    <property type="protein sequence ID" value="AAD33883.1"/>
    <property type="molecule type" value="Genomic_DNA"/>
</dbReference>
<dbReference type="EMBL" id="DS545123">
    <property type="protein sequence ID" value="EDQ56966.1"/>
    <property type="molecule type" value="Genomic_DNA"/>
</dbReference>
<dbReference type="RefSeq" id="XP_001778184.1">
    <property type="nucleotide sequence ID" value="XM_001778132.1"/>
</dbReference>
<dbReference type="SMR" id="Q9XFG3"/>
<dbReference type="FunCoup" id="Q9XFG3">
    <property type="interactions" value="4102"/>
</dbReference>
<dbReference type="PaxDb" id="3218-PP1S234_17V6.1"/>
<dbReference type="EnsemblPlants" id="Pp3c19_7110V3.1">
    <property type="protein sequence ID" value="Pp3c19_7110V3.1"/>
    <property type="gene ID" value="Pp3c19_7110"/>
</dbReference>
<dbReference type="EnsemblPlants" id="Pp3c19_7110V3.2">
    <property type="protein sequence ID" value="Pp3c19_7110V3.2"/>
    <property type="gene ID" value="Pp3c19_7110"/>
</dbReference>
<dbReference type="Gramene" id="Pp3c19_7110V3.1">
    <property type="protein sequence ID" value="Pp3c19_7110V3.1"/>
    <property type="gene ID" value="Pp3c19_7110"/>
</dbReference>
<dbReference type="Gramene" id="Pp3c19_7110V3.2">
    <property type="protein sequence ID" value="Pp3c19_7110V3.2"/>
    <property type="gene ID" value="Pp3c19_7110"/>
</dbReference>
<dbReference type="eggNOG" id="KOG1374">
    <property type="taxonomic scope" value="Eukaryota"/>
</dbReference>
<dbReference type="HOGENOM" id="CLU_015718_1_0_1"/>
<dbReference type="InParanoid" id="Q9XFG3"/>
<dbReference type="OMA" id="ASGFSQX"/>
<dbReference type="OrthoDB" id="10249382at2759"/>
<dbReference type="Proteomes" id="UP000006727">
    <property type="component" value="Chromosome 19"/>
</dbReference>
<dbReference type="GO" id="GO:0005737">
    <property type="term" value="C:cytoplasm"/>
    <property type="evidence" value="ECO:0007669"/>
    <property type="project" value="UniProtKB-KW"/>
</dbReference>
<dbReference type="GO" id="GO:0000931">
    <property type="term" value="C:gamma-tubulin ring complex"/>
    <property type="evidence" value="ECO:0000318"/>
    <property type="project" value="GO_Central"/>
</dbReference>
<dbReference type="GO" id="GO:0005874">
    <property type="term" value="C:microtubule"/>
    <property type="evidence" value="ECO:0007669"/>
    <property type="project" value="UniProtKB-KW"/>
</dbReference>
<dbReference type="GO" id="GO:0005634">
    <property type="term" value="C:nucleus"/>
    <property type="evidence" value="ECO:0000318"/>
    <property type="project" value="GO_Central"/>
</dbReference>
<dbReference type="GO" id="GO:0005819">
    <property type="term" value="C:spindle"/>
    <property type="evidence" value="ECO:0000318"/>
    <property type="project" value="GO_Central"/>
</dbReference>
<dbReference type="GO" id="GO:0005525">
    <property type="term" value="F:GTP binding"/>
    <property type="evidence" value="ECO:0000318"/>
    <property type="project" value="GO_Central"/>
</dbReference>
<dbReference type="GO" id="GO:0140490">
    <property type="term" value="F:microtubule nucleator activity"/>
    <property type="evidence" value="ECO:0000318"/>
    <property type="project" value="GO_Central"/>
</dbReference>
<dbReference type="GO" id="GO:0031122">
    <property type="term" value="P:cytoplasmic microtubule organization"/>
    <property type="evidence" value="ECO:0007669"/>
    <property type="project" value="InterPro"/>
</dbReference>
<dbReference type="GO" id="GO:0000212">
    <property type="term" value="P:meiotic spindle organization"/>
    <property type="evidence" value="ECO:0000318"/>
    <property type="project" value="GO_Central"/>
</dbReference>
<dbReference type="GO" id="GO:0007020">
    <property type="term" value="P:microtubule nucleation"/>
    <property type="evidence" value="ECO:0000318"/>
    <property type="project" value="GO_Central"/>
</dbReference>
<dbReference type="GO" id="GO:0000278">
    <property type="term" value="P:mitotic cell cycle"/>
    <property type="evidence" value="ECO:0000318"/>
    <property type="project" value="GO_Central"/>
</dbReference>
<dbReference type="GO" id="GO:0000070">
    <property type="term" value="P:mitotic sister chromatid segregation"/>
    <property type="evidence" value="ECO:0000318"/>
    <property type="project" value="GO_Central"/>
</dbReference>
<dbReference type="GO" id="GO:0007052">
    <property type="term" value="P:mitotic spindle organization"/>
    <property type="evidence" value="ECO:0000318"/>
    <property type="project" value="GO_Central"/>
</dbReference>
<dbReference type="CDD" id="cd02188">
    <property type="entry name" value="gamma_tubulin"/>
    <property type="match status" value="1"/>
</dbReference>
<dbReference type="FunFam" id="1.10.287.600:FF:000004">
    <property type="entry name" value="Tubulin gamma chain"/>
    <property type="match status" value="1"/>
</dbReference>
<dbReference type="FunFam" id="3.30.1330.20:FF:000003">
    <property type="entry name" value="Tubulin gamma chain"/>
    <property type="match status" value="1"/>
</dbReference>
<dbReference type="FunFam" id="3.40.50.1440:FF:000010">
    <property type="entry name" value="Tubulin gamma chain"/>
    <property type="match status" value="1"/>
</dbReference>
<dbReference type="Gene3D" id="1.10.287.600">
    <property type="entry name" value="Helix hairpin bin"/>
    <property type="match status" value="1"/>
</dbReference>
<dbReference type="Gene3D" id="3.30.1330.20">
    <property type="entry name" value="Tubulin/FtsZ, C-terminal domain"/>
    <property type="match status" value="1"/>
</dbReference>
<dbReference type="Gene3D" id="3.40.50.1440">
    <property type="entry name" value="Tubulin/FtsZ, GTPase domain"/>
    <property type="match status" value="1"/>
</dbReference>
<dbReference type="InterPro" id="IPR002454">
    <property type="entry name" value="Gamma_tubulin"/>
</dbReference>
<dbReference type="InterPro" id="IPR008280">
    <property type="entry name" value="Tub_FtsZ_C"/>
</dbReference>
<dbReference type="InterPro" id="IPR000217">
    <property type="entry name" value="Tubulin"/>
</dbReference>
<dbReference type="InterPro" id="IPR037103">
    <property type="entry name" value="Tubulin/FtsZ-like_C"/>
</dbReference>
<dbReference type="InterPro" id="IPR018316">
    <property type="entry name" value="Tubulin/FtsZ_2-layer-sand-dom"/>
</dbReference>
<dbReference type="InterPro" id="IPR036525">
    <property type="entry name" value="Tubulin/FtsZ_GTPase_sf"/>
</dbReference>
<dbReference type="InterPro" id="IPR023123">
    <property type="entry name" value="Tubulin_C"/>
</dbReference>
<dbReference type="InterPro" id="IPR017975">
    <property type="entry name" value="Tubulin_CS"/>
</dbReference>
<dbReference type="InterPro" id="IPR003008">
    <property type="entry name" value="Tubulin_FtsZ_GTPase"/>
</dbReference>
<dbReference type="PANTHER" id="PTHR11588">
    <property type="entry name" value="TUBULIN"/>
    <property type="match status" value="1"/>
</dbReference>
<dbReference type="Pfam" id="PF00091">
    <property type="entry name" value="Tubulin"/>
    <property type="match status" value="1"/>
</dbReference>
<dbReference type="Pfam" id="PF03953">
    <property type="entry name" value="Tubulin_C"/>
    <property type="match status" value="1"/>
</dbReference>
<dbReference type="PRINTS" id="PR01164">
    <property type="entry name" value="GAMMATUBULIN"/>
</dbReference>
<dbReference type="PRINTS" id="PR01161">
    <property type="entry name" value="TUBULIN"/>
</dbReference>
<dbReference type="SMART" id="SM00864">
    <property type="entry name" value="Tubulin"/>
    <property type="match status" value="1"/>
</dbReference>
<dbReference type="SMART" id="SM00865">
    <property type="entry name" value="Tubulin_C"/>
    <property type="match status" value="1"/>
</dbReference>
<dbReference type="SUPFAM" id="SSF55307">
    <property type="entry name" value="Tubulin C-terminal domain-like"/>
    <property type="match status" value="1"/>
</dbReference>
<dbReference type="SUPFAM" id="SSF52490">
    <property type="entry name" value="Tubulin nucleotide-binding domain-like"/>
    <property type="match status" value="1"/>
</dbReference>
<dbReference type="PROSITE" id="PS00227">
    <property type="entry name" value="TUBULIN"/>
    <property type="match status" value="1"/>
</dbReference>
<protein>
    <recommendedName>
        <fullName>Tubulin gamma chain</fullName>
    </recommendedName>
    <alternativeName>
        <fullName>Gamma-tubulin</fullName>
    </alternativeName>
</protein>
<organism>
    <name type="scientific">Physcomitrium patens</name>
    <name type="common">Spreading-leaved earth moss</name>
    <name type="synonym">Physcomitrella patens</name>
    <dbReference type="NCBI Taxonomy" id="3218"/>
    <lineage>
        <taxon>Eukaryota</taxon>
        <taxon>Viridiplantae</taxon>
        <taxon>Streptophyta</taxon>
        <taxon>Embryophyta</taxon>
        <taxon>Bryophyta</taxon>
        <taxon>Bryophytina</taxon>
        <taxon>Bryopsida</taxon>
        <taxon>Funariidae</taxon>
        <taxon>Funariales</taxon>
        <taxon>Funariaceae</taxon>
        <taxon>Physcomitrium</taxon>
    </lineage>
</organism>
<gene>
    <name type="primary">TUBG1</name>
    <name type="ORF">PHYPADRAFT_170153</name>
</gene>
<reference key="1">
    <citation type="submission" date="1999-04" db="EMBL/GenBank/DDBJ databases">
        <title>Characterization of gamma tubulin from Physcomitrella patens.</title>
        <authorList>
            <person name="Wagner T.A."/>
            <person name="Sack F.D."/>
            <person name="Oakely B.R."/>
            <person name="Oakely C.E."/>
            <person name="Schwuchow J."/>
        </authorList>
    </citation>
    <scope>NUCLEOTIDE SEQUENCE [GENOMIC DNA]</scope>
    <source>
        <strain>WT</strain>
    </source>
</reference>
<reference key="2">
    <citation type="journal article" date="2008" name="Science">
        <title>The Physcomitrella genome reveals evolutionary insights into the conquest of land by plants.</title>
        <authorList>
            <person name="Rensing S.A."/>
            <person name="Lang D."/>
            <person name="Zimmer A.D."/>
            <person name="Terry A."/>
            <person name="Salamov A."/>
            <person name="Shapiro H."/>
            <person name="Nishiyama T."/>
            <person name="Perroud P.-F."/>
            <person name="Lindquist E.A."/>
            <person name="Kamisugi Y."/>
            <person name="Tanahashi T."/>
            <person name="Sakakibara K."/>
            <person name="Fujita T."/>
            <person name="Oishi K."/>
            <person name="Shin-I T."/>
            <person name="Kuroki Y."/>
            <person name="Toyoda A."/>
            <person name="Suzuki Y."/>
            <person name="Hashimoto S.-I."/>
            <person name="Yamaguchi K."/>
            <person name="Sugano S."/>
            <person name="Kohara Y."/>
            <person name="Fujiyama A."/>
            <person name="Anterola A."/>
            <person name="Aoki S."/>
            <person name="Ashton N."/>
            <person name="Barbazuk W.B."/>
            <person name="Barker E."/>
            <person name="Bennetzen J.L."/>
            <person name="Blankenship R."/>
            <person name="Cho S.H."/>
            <person name="Dutcher S.K."/>
            <person name="Estelle M."/>
            <person name="Fawcett J.A."/>
            <person name="Gundlach H."/>
            <person name="Hanada K."/>
            <person name="Heyl A."/>
            <person name="Hicks K.A."/>
            <person name="Hughes J."/>
            <person name="Lohr M."/>
            <person name="Mayer K."/>
            <person name="Melkozernov A."/>
            <person name="Murata T."/>
            <person name="Nelson D.R."/>
            <person name="Pils B."/>
            <person name="Prigge M."/>
            <person name="Reiss B."/>
            <person name="Renner T."/>
            <person name="Rombauts S."/>
            <person name="Rushton P.J."/>
            <person name="Sanderfoot A."/>
            <person name="Schween G."/>
            <person name="Shiu S.-H."/>
            <person name="Stueber K."/>
            <person name="Theodoulou F.L."/>
            <person name="Tu H."/>
            <person name="Van de Peer Y."/>
            <person name="Verrier P.J."/>
            <person name="Waters E."/>
            <person name="Wood A."/>
            <person name="Yang L."/>
            <person name="Cove D."/>
            <person name="Cuming A.C."/>
            <person name="Hasebe M."/>
            <person name="Lucas S."/>
            <person name="Mishler B.D."/>
            <person name="Reski R."/>
            <person name="Grigoriev I.V."/>
            <person name="Quatrano R.S."/>
            <person name="Boore J.L."/>
        </authorList>
    </citation>
    <scope>NUCLEOTIDE SEQUENCE [LARGE SCALE GENOMIC DNA]</scope>
    <source>
        <strain>cv. Gransden 2004</strain>
    </source>
</reference>
<evidence type="ECO:0000250" key="1">
    <source>
        <dbReference type="UniProtKB" id="P38557"/>
    </source>
</evidence>
<evidence type="ECO:0000255" key="2"/>
<evidence type="ECO:0000256" key="3">
    <source>
        <dbReference type="SAM" id="MobiDB-lite"/>
    </source>
</evidence>
<evidence type="ECO:0000305" key="4"/>
<proteinExistence type="inferred from homology"/>
<comment type="function">
    <text>Tubulin is the major constituent of microtubules. The gamma chain is found at microtubule organizing centers (MTOC) such as the spindle poles, suggesting that it is involved in the minus-end nucleation of microtubule assembly.</text>
</comment>
<comment type="subcellular location">
    <subcellularLocation>
        <location evidence="1">Cytoplasm</location>
        <location evidence="1">Cytoskeleton</location>
        <location evidence="1">Microtubule organizing center</location>
    </subcellularLocation>
</comment>
<comment type="similarity">
    <text evidence="4">Belongs to the tubulin family.</text>
</comment>
<keyword id="KW-0963">Cytoplasm</keyword>
<keyword id="KW-0206">Cytoskeleton</keyword>
<keyword id="KW-0342">GTP-binding</keyword>
<keyword id="KW-0493">Microtubule</keyword>
<keyword id="KW-0547">Nucleotide-binding</keyword>
<keyword id="KW-1185">Reference proteome</keyword>